<organism>
    <name type="scientific">Mycobacterium tuberculosis (strain ATCC 25618 / H37Rv)</name>
    <dbReference type="NCBI Taxonomy" id="83332"/>
    <lineage>
        <taxon>Bacteria</taxon>
        <taxon>Bacillati</taxon>
        <taxon>Actinomycetota</taxon>
        <taxon>Actinomycetes</taxon>
        <taxon>Mycobacteriales</taxon>
        <taxon>Mycobacteriaceae</taxon>
        <taxon>Mycobacterium</taxon>
        <taxon>Mycobacterium tuberculosis complex</taxon>
    </lineage>
</organism>
<protein>
    <recommendedName>
        <fullName>Putative peroxiredoxin Rv1608c</fullName>
        <ecNumber evidence="2">1.11.1.24</ecNumber>
    </recommendedName>
    <alternativeName>
        <fullName>Bacterioferritin comigratory protein</fullName>
    </alternativeName>
    <alternativeName>
        <fullName>Thioredoxin peroxidase</fullName>
    </alternativeName>
    <alternativeName>
        <fullName evidence="4">Thioredoxin-dependent peroxiredoxin Rv1608c</fullName>
    </alternativeName>
</protein>
<sequence length="154" mass="16894">MKTGDTVADFELPDQTGTPRRLSVLLSDGPVVLFFYPAAMTPGCTKEACHFRDLAKEFAEVRASRVGISTDPVRKQAKFAEVRRFDYPLLSDAQGTVAAQFGVKRGLLGKLMPVKRTTFVIDTDRKVLDVISSEFSMDAHADKALATLRAIRSG</sequence>
<evidence type="ECO:0000250" key="1"/>
<evidence type="ECO:0000250" key="2">
    <source>
        <dbReference type="UniProtKB" id="P0AE52"/>
    </source>
</evidence>
<evidence type="ECO:0000255" key="3">
    <source>
        <dbReference type="PROSITE-ProRule" id="PRU00691"/>
    </source>
</evidence>
<evidence type="ECO:0000305" key="4"/>
<evidence type="ECO:0007829" key="5">
    <source>
        <dbReference type="PDB" id="5EPF"/>
    </source>
</evidence>
<reference key="1">
    <citation type="journal article" date="1998" name="Nature">
        <title>Deciphering the biology of Mycobacterium tuberculosis from the complete genome sequence.</title>
        <authorList>
            <person name="Cole S.T."/>
            <person name="Brosch R."/>
            <person name="Parkhill J."/>
            <person name="Garnier T."/>
            <person name="Churcher C.M."/>
            <person name="Harris D.E."/>
            <person name="Gordon S.V."/>
            <person name="Eiglmeier K."/>
            <person name="Gas S."/>
            <person name="Barry C.E. III"/>
            <person name="Tekaia F."/>
            <person name="Badcock K."/>
            <person name="Basham D."/>
            <person name="Brown D."/>
            <person name="Chillingworth T."/>
            <person name="Connor R."/>
            <person name="Davies R.M."/>
            <person name="Devlin K."/>
            <person name="Feltwell T."/>
            <person name="Gentles S."/>
            <person name="Hamlin N."/>
            <person name="Holroyd S."/>
            <person name="Hornsby T."/>
            <person name="Jagels K."/>
            <person name="Krogh A."/>
            <person name="McLean J."/>
            <person name="Moule S."/>
            <person name="Murphy L.D."/>
            <person name="Oliver S."/>
            <person name="Osborne J."/>
            <person name="Quail M.A."/>
            <person name="Rajandream M.A."/>
            <person name="Rogers J."/>
            <person name="Rutter S."/>
            <person name="Seeger K."/>
            <person name="Skelton S."/>
            <person name="Squares S."/>
            <person name="Squares R."/>
            <person name="Sulston J.E."/>
            <person name="Taylor K."/>
            <person name="Whitehead S."/>
            <person name="Barrell B.G."/>
        </authorList>
    </citation>
    <scope>NUCLEOTIDE SEQUENCE [LARGE SCALE GENOMIC DNA]</scope>
    <source>
        <strain>ATCC 25618 / H37Rv</strain>
    </source>
</reference>
<reference key="2">
    <citation type="journal article" date="2011" name="Mol. Cell. Proteomics">
        <title>Proteogenomic analysis of Mycobacterium tuberculosis by high resolution mass spectrometry.</title>
        <authorList>
            <person name="Kelkar D.S."/>
            <person name="Kumar D."/>
            <person name="Kumar P."/>
            <person name="Balakrishnan L."/>
            <person name="Muthusamy B."/>
            <person name="Yadav A.K."/>
            <person name="Shrivastava P."/>
            <person name="Marimuthu A."/>
            <person name="Anand S."/>
            <person name="Sundaram H."/>
            <person name="Kingsbury R."/>
            <person name="Harsha H.C."/>
            <person name="Nair B."/>
            <person name="Prasad T.S."/>
            <person name="Chauhan D.S."/>
            <person name="Katoch K."/>
            <person name="Katoch V.M."/>
            <person name="Kumar P."/>
            <person name="Chaerkady R."/>
            <person name="Ramachandran S."/>
            <person name="Dash D."/>
            <person name="Pandey A."/>
        </authorList>
    </citation>
    <scope>IDENTIFICATION BY MASS SPECTROMETRY [LARGE SCALE ANALYSIS]</scope>
    <source>
        <strain>ATCC 25618 / H37Rv</strain>
    </source>
</reference>
<reference key="3">
    <citation type="submission" date="2015-11" db="PDB data bank">
        <title>Crystal structure of peroxidoxin BcpB from Mycobacterium tuberculosis.</title>
        <authorList>
            <person name="Abendroth J."/>
            <person name="Mayclin S.J."/>
            <person name="Lorimer D.D."/>
            <person name="Edwards T.E."/>
        </authorList>
    </citation>
    <scope>X-RAY CRYSTALLOGRAPHY (1.35 ANGSTROMS)</scope>
</reference>
<feature type="chain" id="PRO_0000396097" description="Putative peroxiredoxin Rv1608c">
    <location>
        <begin position="1"/>
        <end position="154"/>
    </location>
</feature>
<feature type="domain" description="Thioredoxin" evidence="3">
    <location>
        <begin position="1"/>
        <end position="153"/>
    </location>
</feature>
<feature type="active site" evidence="1">
    <location>
        <position position="44"/>
    </location>
</feature>
<feature type="active site" description="Cysteine sulfenic acid (-SOH) intermediate" evidence="2">
    <location>
        <position position="44"/>
    </location>
</feature>
<feature type="disulfide bond" description="Redox-active" evidence="2">
    <location>
        <begin position="44"/>
        <end position="49"/>
    </location>
</feature>
<feature type="strand" evidence="5">
    <location>
        <begin position="11"/>
        <end position="13"/>
    </location>
</feature>
<feature type="strand" evidence="5">
    <location>
        <begin position="19"/>
        <end position="21"/>
    </location>
</feature>
<feature type="helix" evidence="5">
    <location>
        <begin position="22"/>
        <end position="25"/>
    </location>
</feature>
<feature type="turn" evidence="5">
    <location>
        <begin position="26"/>
        <end position="28"/>
    </location>
</feature>
<feature type="strand" evidence="5">
    <location>
        <begin position="31"/>
        <end position="35"/>
    </location>
</feature>
<feature type="helix" evidence="5">
    <location>
        <begin position="42"/>
        <end position="53"/>
    </location>
</feature>
<feature type="helix" evidence="5">
    <location>
        <begin position="55"/>
        <end position="60"/>
    </location>
</feature>
<feature type="strand" evidence="5">
    <location>
        <begin position="64"/>
        <end position="71"/>
    </location>
</feature>
<feature type="helix" evidence="5">
    <location>
        <begin position="73"/>
        <end position="83"/>
    </location>
</feature>
<feature type="strand" evidence="5">
    <location>
        <begin position="89"/>
        <end position="91"/>
    </location>
</feature>
<feature type="helix" evidence="5">
    <location>
        <begin position="96"/>
        <end position="101"/>
    </location>
</feature>
<feature type="strand" evidence="5">
    <location>
        <begin position="105"/>
        <end position="107"/>
    </location>
</feature>
<feature type="strand" evidence="5">
    <location>
        <begin position="110"/>
        <end position="112"/>
    </location>
</feature>
<feature type="strand" evidence="5">
    <location>
        <begin position="117"/>
        <end position="121"/>
    </location>
</feature>
<feature type="strand" evidence="5">
    <location>
        <begin position="125"/>
        <end position="131"/>
    </location>
</feature>
<feature type="helix" evidence="5">
    <location>
        <begin position="139"/>
        <end position="150"/>
    </location>
</feature>
<proteinExistence type="evidence at protein level"/>
<comment type="function">
    <text evidence="2">Thiol-specific peroxidase that catalyzes the reduction of hydrogen peroxide and organic hydroperoxides to water and alcohols, respectively. Plays a role in cell protection against oxidative stress by detoxifying peroxides and as sensor of hydrogen peroxide-mediated signaling events.</text>
</comment>
<comment type="catalytic activity">
    <reaction evidence="2">
        <text>a hydroperoxide + [thioredoxin]-dithiol = an alcohol + [thioredoxin]-disulfide + H2O</text>
        <dbReference type="Rhea" id="RHEA:62620"/>
        <dbReference type="Rhea" id="RHEA-COMP:10698"/>
        <dbReference type="Rhea" id="RHEA-COMP:10700"/>
        <dbReference type="ChEBI" id="CHEBI:15377"/>
        <dbReference type="ChEBI" id="CHEBI:29950"/>
        <dbReference type="ChEBI" id="CHEBI:30879"/>
        <dbReference type="ChEBI" id="CHEBI:35924"/>
        <dbReference type="ChEBI" id="CHEBI:50058"/>
        <dbReference type="EC" id="1.11.1.24"/>
    </reaction>
</comment>
<comment type="subunit">
    <text evidence="2">Monomer.</text>
</comment>
<comment type="miscellaneous">
    <text evidence="2">The active site is a conserved redox-active cysteine residue, the peroxidatic cysteine (C(P)), which makes the nucleophilic attack on the peroxide substrate. The peroxide oxidizes the C(P)-SH to cysteine sulfenic acid (C(P)-SOH), which then reacts with another cysteine residue, the resolving cysteine (C(R)), to form a disulfide bridge. The disulfide is subsequently reduced by an appropriate electron donor to complete the catalytic cycle. In this atypical 2-Cys peroxiredoxin, C(R) is present in the same subunit to form an intramolecular disulfide. The disulfide is subsequently reduced by thioredoxin.</text>
</comment>
<comment type="similarity">
    <text evidence="4">Belongs to the peroxiredoxin family. BCP/PrxQ subfamily.</text>
</comment>
<dbReference type="EC" id="1.11.1.24" evidence="2"/>
<dbReference type="EMBL" id="AL123456">
    <property type="protein sequence ID" value="CCP44372.1"/>
    <property type="molecule type" value="Genomic_DNA"/>
</dbReference>
<dbReference type="PIR" id="G70819">
    <property type="entry name" value="G70819"/>
</dbReference>
<dbReference type="RefSeq" id="NP_216124.1">
    <property type="nucleotide sequence ID" value="NC_000962.3"/>
</dbReference>
<dbReference type="RefSeq" id="WP_003407974.1">
    <property type="nucleotide sequence ID" value="NZ_NVQJ01000016.1"/>
</dbReference>
<dbReference type="PDB" id="5EPF">
    <property type="method" value="X-ray"/>
    <property type="resolution" value="1.35 A"/>
    <property type="chains" value="A=1-154"/>
</dbReference>
<dbReference type="PDBsum" id="5EPF"/>
<dbReference type="SMR" id="P9WID9"/>
<dbReference type="STRING" id="83332.Rv1608c"/>
<dbReference type="PaxDb" id="83332-Rv1608c"/>
<dbReference type="GeneID" id="45425576"/>
<dbReference type="GeneID" id="885530"/>
<dbReference type="KEGG" id="mtu:Rv1608c"/>
<dbReference type="KEGG" id="mtv:RVBD_1608c"/>
<dbReference type="TubercuList" id="Rv1608c"/>
<dbReference type="eggNOG" id="COG1225">
    <property type="taxonomic scope" value="Bacteria"/>
</dbReference>
<dbReference type="InParanoid" id="P9WID9"/>
<dbReference type="OrthoDB" id="9812811at2"/>
<dbReference type="PhylomeDB" id="P9WID9"/>
<dbReference type="Proteomes" id="UP000001584">
    <property type="component" value="Chromosome"/>
</dbReference>
<dbReference type="GO" id="GO:0005737">
    <property type="term" value="C:cytoplasm"/>
    <property type="evidence" value="ECO:0000318"/>
    <property type="project" value="GO_Central"/>
</dbReference>
<dbReference type="GO" id="GO:0008379">
    <property type="term" value="F:thioredoxin peroxidase activity"/>
    <property type="evidence" value="ECO:0000318"/>
    <property type="project" value="GO_Central"/>
</dbReference>
<dbReference type="GO" id="GO:0045454">
    <property type="term" value="P:cell redox homeostasis"/>
    <property type="evidence" value="ECO:0000318"/>
    <property type="project" value="GO_Central"/>
</dbReference>
<dbReference type="GO" id="GO:0034599">
    <property type="term" value="P:cellular response to oxidative stress"/>
    <property type="evidence" value="ECO:0000318"/>
    <property type="project" value="GO_Central"/>
</dbReference>
<dbReference type="CDD" id="cd03017">
    <property type="entry name" value="PRX_BCP"/>
    <property type="match status" value="1"/>
</dbReference>
<dbReference type="FunFam" id="3.40.30.10:FF:000267">
    <property type="entry name" value="Peroxidoxin bcpB"/>
    <property type="match status" value="1"/>
</dbReference>
<dbReference type="Gene3D" id="3.40.30.10">
    <property type="entry name" value="Glutaredoxin"/>
    <property type="match status" value="1"/>
</dbReference>
<dbReference type="InterPro" id="IPR000866">
    <property type="entry name" value="AhpC/TSA"/>
</dbReference>
<dbReference type="InterPro" id="IPR024706">
    <property type="entry name" value="Peroxiredoxin_AhpC-typ"/>
</dbReference>
<dbReference type="InterPro" id="IPR050924">
    <property type="entry name" value="Peroxiredoxin_BCP/PrxQ"/>
</dbReference>
<dbReference type="InterPro" id="IPR036249">
    <property type="entry name" value="Thioredoxin-like_sf"/>
</dbReference>
<dbReference type="InterPro" id="IPR013766">
    <property type="entry name" value="Thioredoxin_domain"/>
</dbReference>
<dbReference type="PANTHER" id="PTHR42801:SF8">
    <property type="entry name" value="PEROXIREDOXIN RV1608C-RELATED"/>
    <property type="match status" value="1"/>
</dbReference>
<dbReference type="PANTHER" id="PTHR42801">
    <property type="entry name" value="THIOREDOXIN-DEPENDENT PEROXIDE REDUCTASE"/>
    <property type="match status" value="1"/>
</dbReference>
<dbReference type="Pfam" id="PF00578">
    <property type="entry name" value="AhpC-TSA"/>
    <property type="match status" value="1"/>
</dbReference>
<dbReference type="PIRSF" id="PIRSF000239">
    <property type="entry name" value="AHPC"/>
    <property type="match status" value="1"/>
</dbReference>
<dbReference type="SUPFAM" id="SSF52833">
    <property type="entry name" value="Thioredoxin-like"/>
    <property type="match status" value="1"/>
</dbReference>
<dbReference type="PROSITE" id="PS51352">
    <property type="entry name" value="THIOREDOXIN_2"/>
    <property type="match status" value="1"/>
</dbReference>
<name>BCPB_MYCTU</name>
<accession>P9WID9</accession>
<accession>L0T7E6</accession>
<accession>O53911</accession>
<accession>Q7D8A1</accession>
<keyword id="KW-0002">3D-structure</keyword>
<keyword id="KW-0049">Antioxidant</keyword>
<keyword id="KW-1015">Disulfide bond</keyword>
<keyword id="KW-0560">Oxidoreductase</keyword>
<keyword id="KW-0575">Peroxidase</keyword>
<keyword id="KW-0676">Redox-active center</keyword>
<keyword id="KW-1185">Reference proteome</keyword>
<gene>
    <name type="primary">bcpB</name>
    <name type="synonym">bcp1</name>
    <name type="ordered locus">Rv1608c</name>
</gene>